<organism>
    <name type="scientific">Azoarcus sp. (strain BH72)</name>
    <dbReference type="NCBI Taxonomy" id="418699"/>
    <lineage>
        <taxon>Bacteria</taxon>
        <taxon>Pseudomonadati</taxon>
        <taxon>Pseudomonadota</taxon>
        <taxon>Betaproteobacteria</taxon>
        <taxon>Rhodocyclales</taxon>
        <taxon>Zoogloeaceae</taxon>
        <taxon>Azoarcus</taxon>
    </lineage>
</organism>
<proteinExistence type="inferred from homology"/>
<protein>
    <recommendedName>
        <fullName evidence="1">Fructose-1,6-bisphosphatase class 1</fullName>
        <shortName evidence="1">FBPase class 1</shortName>
        <ecNumber evidence="1">3.1.3.11</ecNumber>
    </recommendedName>
    <alternativeName>
        <fullName evidence="1">D-fructose-1,6-bisphosphate 1-phosphohydrolase class 1</fullName>
    </alternativeName>
</protein>
<evidence type="ECO:0000255" key="1">
    <source>
        <dbReference type="HAMAP-Rule" id="MF_01855"/>
    </source>
</evidence>
<gene>
    <name evidence="1" type="primary">fbp</name>
    <name type="ordered locus">azo0968</name>
</gene>
<feature type="chain" id="PRO_0000364464" description="Fructose-1,6-bisphosphatase class 1">
    <location>
        <begin position="1"/>
        <end position="333"/>
    </location>
</feature>
<feature type="binding site" evidence="1">
    <location>
        <position position="90"/>
    </location>
    <ligand>
        <name>Mg(2+)</name>
        <dbReference type="ChEBI" id="CHEBI:18420"/>
        <label>1</label>
    </ligand>
</feature>
<feature type="binding site" evidence="1">
    <location>
        <position position="112"/>
    </location>
    <ligand>
        <name>Mg(2+)</name>
        <dbReference type="ChEBI" id="CHEBI:18420"/>
        <label>1</label>
    </ligand>
</feature>
<feature type="binding site" evidence="1">
    <location>
        <position position="112"/>
    </location>
    <ligand>
        <name>Mg(2+)</name>
        <dbReference type="ChEBI" id="CHEBI:18420"/>
        <label>2</label>
    </ligand>
</feature>
<feature type="binding site" evidence="1">
    <location>
        <position position="114"/>
    </location>
    <ligand>
        <name>Mg(2+)</name>
        <dbReference type="ChEBI" id="CHEBI:18420"/>
        <label>1</label>
    </ligand>
</feature>
<feature type="binding site" evidence="1">
    <location>
        <begin position="115"/>
        <end position="118"/>
    </location>
    <ligand>
        <name>substrate</name>
    </ligand>
</feature>
<feature type="binding site" evidence="1">
    <location>
        <position position="115"/>
    </location>
    <ligand>
        <name>Mg(2+)</name>
        <dbReference type="ChEBI" id="CHEBI:18420"/>
        <label>2</label>
    </ligand>
</feature>
<feature type="binding site" evidence="1">
    <location>
        <position position="207"/>
    </location>
    <ligand>
        <name>substrate</name>
    </ligand>
</feature>
<feature type="binding site" evidence="1">
    <location>
        <position position="273"/>
    </location>
    <ligand>
        <name>substrate</name>
    </ligand>
</feature>
<feature type="binding site" evidence="1">
    <location>
        <position position="279"/>
    </location>
    <ligand>
        <name>Mg(2+)</name>
        <dbReference type="ChEBI" id="CHEBI:18420"/>
        <label>2</label>
    </ligand>
</feature>
<accession>A1K430</accession>
<keyword id="KW-0119">Carbohydrate metabolism</keyword>
<keyword id="KW-0963">Cytoplasm</keyword>
<keyword id="KW-0378">Hydrolase</keyword>
<keyword id="KW-0460">Magnesium</keyword>
<keyword id="KW-0479">Metal-binding</keyword>
<keyword id="KW-1185">Reference proteome</keyword>
<sequence length="333" mass="36710">MRRVTLTQFLIEQQRAGRVSADLRLLIEVVARAVKAISVNVSKGALAGVLGEAGTDNVQGEAQKKLDVIANEILLQANEWGGHLAAMASEEVETVHQIPFDYPKGGYLLLFDPLDGSSNIDVNISVGTIFSVLRFPEGEAEPTEQSFMQPGREQVAAGYAVYGPSTQLVLTVGHGVHAFTLDREMGSFIYTHPFMTIPDDTHEFAINASNARFWEEPVQRYVGELQAGKTGPRGKDFNMRWVASMVADVHRILTRGGIFMYPLDEKCRAQGGKLRLMYEANPMAMLVEQAGGAATTGRERILDLMPTKLHQRVPVILGSRNEVERVTAYHRES</sequence>
<dbReference type="EC" id="3.1.3.11" evidence="1"/>
<dbReference type="EMBL" id="AM406670">
    <property type="protein sequence ID" value="CAL93585.1"/>
    <property type="molecule type" value="Genomic_DNA"/>
</dbReference>
<dbReference type="RefSeq" id="WP_011764702.1">
    <property type="nucleotide sequence ID" value="NC_008702.1"/>
</dbReference>
<dbReference type="SMR" id="A1K430"/>
<dbReference type="STRING" id="62928.azo0968"/>
<dbReference type="KEGG" id="azo:azo0968"/>
<dbReference type="eggNOG" id="COG0158">
    <property type="taxonomic scope" value="Bacteria"/>
</dbReference>
<dbReference type="HOGENOM" id="CLU_039977_0_0_4"/>
<dbReference type="UniPathway" id="UPA00138"/>
<dbReference type="Proteomes" id="UP000002588">
    <property type="component" value="Chromosome"/>
</dbReference>
<dbReference type="GO" id="GO:0005829">
    <property type="term" value="C:cytosol"/>
    <property type="evidence" value="ECO:0007669"/>
    <property type="project" value="TreeGrafter"/>
</dbReference>
<dbReference type="GO" id="GO:0042132">
    <property type="term" value="F:fructose 1,6-bisphosphate 1-phosphatase activity"/>
    <property type="evidence" value="ECO:0007669"/>
    <property type="project" value="UniProtKB-UniRule"/>
</dbReference>
<dbReference type="GO" id="GO:0000287">
    <property type="term" value="F:magnesium ion binding"/>
    <property type="evidence" value="ECO:0007669"/>
    <property type="project" value="UniProtKB-UniRule"/>
</dbReference>
<dbReference type="GO" id="GO:0030388">
    <property type="term" value="P:fructose 1,6-bisphosphate metabolic process"/>
    <property type="evidence" value="ECO:0007669"/>
    <property type="project" value="TreeGrafter"/>
</dbReference>
<dbReference type="GO" id="GO:0006002">
    <property type="term" value="P:fructose 6-phosphate metabolic process"/>
    <property type="evidence" value="ECO:0007669"/>
    <property type="project" value="TreeGrafter"/>
</dbReference>
<dbReference type="GO" id="GO:0006000">
    <property type="term" value="P:fructose metabolic process"/>
    <property type="evidence" value="ECO:0007669"/>
    <property type="project" value="TreeGrafter"/>
</dbReference>
<dbReference type="GO" id="GO:0006094">
    <property type="term" value="P:gluconeogenesis"/>
    <property type="evidence" value="ECO:0007669"/>
    <property type="project" value="UniProtKB-UniRule"/>
</dbReference>
<dbReference type="GO" id="GO:0005986">
    <property type="term" value="P:sucrose biosynthetic process"/>
    <property type="evidence" value="ECO:0007669"/>
    <property type="project" value="TreeGrafter"/>
</dbReference>
<dbReference type="CDD" id="cd00354">
    <property type="entry name" value="FBPase"/>
    <property type="match status" value="1"/>
</dbReference>
<dbReference type="FunFam" id="3.30.540.10:FF:000006">
    <property type="entry name" value="Fructose-1,6-bisphosphatase class 1"/>
    <property type="match status" value="1"/>
</dbReference>
<dbReference type="FunFam" id="3.40.190.80:FF:000011">
    <property type="entry name" value="Fructose-1,6-bisphosphatase class 1"/>
    <property type="match status" value="1"/>
</dbReference>
<dbReference type="Gene3D" id="3.40.190.80">
    <property type="match status" value="1"/>
</dbReference>
<dbReference type="Gene3D" id="3.30.540.10">
    <property type="entry name" value="Fructose-1,6-Bisphosphatase, subunit A, domain 1"/>
    <property type="match status" value="1"/>
</dbReference>
<dbReference type="HAMAP" id="MF_01855">
    <property type="entry name" value="FBPase_class1"/>
    <property type="match status" value="1"/>
</dbReference>
<dbReference type="InterPro" id="IPR044015">
    <property type="entry name" value="FBPase_C_dom"/>
</dbReference>
<dbReference type="InterPro" id="IPR000146">
    <property type="entry name" value="FBPase_class-1"/>
</dbReference>
<dbReference type="InterPro" id="IPR033391">
    <property type="entry name" value="FBPase_N"/>
</dbReference>
<dbReference type="InterPro" id="IPR028343">
    <property type="entry name" value="FBPtase"/>
</dbReference>
<dbReference type="NCBIfam" id="NF006778">
    <property type="entry name" value="PRK09293.1-1"/>
    <property type="match status" value="1"/>
</dbReference>
<dbReference type="NCBIfam" id="NF006779">
    <property type="entry name" value="PRK09293.1-3"/>
    <property type="match status" value="1"/>
</dbReference>
<dbReference type="NCBIfam" id="NF006780">
    <property type="entry name" value="PRK09293.1-4"/>
    <property type="match status" value="1"/>
</dbReference>
<dbReference type="PANTHER" id="PTHR11556">
    <property type="entry name" value="FRUCTOSE-1,6-BISPHOSPHATASE-RELATED"/>
    <property type="match status" value="1"/>
</dbReference>
<dbReference type="PANTHER" id="PTHR11556:SF35">
    <property type="entry name" value="SEDOHEPTULOSE-1,7-BISPHOSPHATASE, CHLOROPLASTIC"/>
    <property type="match status" value="1"/>
</dbReference>
<dbReference type="Pfam" id="PF00316">
    <property type="entry name" value="FBPase"/>
    <property type="match status" value="1"/>
</dbReference>
<dbReference type="Pfam" id="PF18913">
    <property type="entry name" value="FBPase_C"/>
    <property type="match status" value="1"/>
</dbReference>
<dbReference type="PIRSF" id="PIRSF500210">
    <property type="entry name" value="FBPtase"/>
    <property type="match status" value="1"/>
</dbReference>
<dbReference type="PIRSF" id="PIRSF000904">
    <property type="entry name" value="FBPtase_SBPase"/>
    <property type="match status" value="1"/>
</dbReference>
<dbReference type="PRINTS" id="PR00115">
    <property type="entry name" value="F16BPHPHTASE"/>
</dbReference>
<dbReference type="SUPFAM" id="SSF56655">
    <property type="entry name" value="Carbohydrate phosphatase"/>
    <property type="match status" value="1"/>
</dbReference>
<name>F16PA_AZOSB</name>
<comment type="catalytic activity">
    <reaction evidence="1">
        <text>beta-D-fructose 1,6-bisphosphate + H2O = beta-D-fructose 6-phosphate + phosphate</text>
        <dbReference type="Rhea" id="RHEA:11064"/>
        <dbReference type="ChEBI" id="CHEBI:15377"/>
        <dbReference type="ChEBI" id="CHEBI:32966"/>
        <dbReference type="ChEBI" id="CHEBI:43474"/>
        <dbReference type="ChEBI" id="CHEBI:57634"/>
        <dbReference type="EC" id="3.1.3.11"/>
    </reaction>
</comment>
<comment type="cofactor">
    <cofactor evidence="1">
        <name>Mg(2+)</name>
        <dbReference type="ChEBI" id="CHEBI:18420"/>
    </cofactor>
    <text evidence="1">Binds 2 magnesium ions per subunit.</text>
</comment>
<comment type="pathway">
    <text evidence="1">Carbohydrate biosynthesis; gluconeogenesis.</text>
</comment>
<comment type="subunit">
    <text evidence="1">Homotetramer.</text>
</comment>
<comment type="subcellular location">
    <subcellularLocation>
        <location evidence="1">Cytoplasm</location>
    </subcellularLocation>
</comment>
<comment type="similarity">
    <text evidence="1">Belongs to the FBPase class 1 family.</text>
</comment>
<reference key="1">
    <citation type="journal article" date="2006" name="Nat. Biotechnol.">
        <title>Complete genome of the mutualistic, N2-fixing grass endophyte Azoarcus sp. strain BH72.</title>
        <authorList>
            <person name="Krause A."/>
            <person name="Ramakumar A."/>
            <person name="Bartels D."/>
            <person name="Battistoni F."/>
            <person name="Bekel T."/>
            <person name="Boch J."/>
            <person name="Boehm M."/>
            <person name="Friedrich F."/>
            <person name="Hurek T."/>
            <person name="Krause L."/>
            <person name="Linke B."/>
            <person name="McHardy A.C."/>
            <person name="Sarkar A."/>
            <person name="Schneiker S."/>
            <person name="Syed A.A."/>
            <person name="Thauer R."/>
            <person name="Vorhoelter F.-J."/>
            <person name="Weidner S."/>
            <person name="Puehler A."/>
            <person name="Reinhold-Hurek B."/>
            <person name="Kaiser O."/>
            <person name="Goesmann A."/>
        </authorList>
    </citation>
    <scope>NUCLEOTIDE SEQUENCE [LARGE SCALE GENOMIC DNA]</scope>
    <source>
        <strain>BH72</strain>
    </source>
</reference>